<evidence type="ECO:0000255" key="1">
    <source>
        <dbReference type="HAMAP-Rule" id="MF_00031"/>
    </source>
</evidence>
<comment type="function">
    <text evidence="1">The RuvA-RuvB-RuvC complex processes Holliday junction (HJ) DNA during genetic recombination and DNA repair, while the RuvA-RuvB complex plays an important role in the rescue of blocked DNA replication forks via replication fork reversal (RFR). RuvA specifically binds to HJ cruciform DNA, conferring on it an open structure. The RuvB hexamer acts as an ATP-dependent pump, pulling dsDNA into and through the RuvAB complex. HJ branch migration allows RuvC to scan DNA until it finds its consensus sequence, where it cleaves and resolves the cruciform DNA.</text>
</comment>
<comment type="subunit">
    <text evidence="1">Homotetramer. Forms an RuvA(8)-RuvB(12)-Holliday junction (HJ) complex. HJ DNA is sandwiched between 2 RuvA tetramers; dsDNA enters through RuvA and exits via RuvB. An RuvB hexamer assembles on each DNA strand where it exits the tetramer. Each RuvB hexamer is contacted by two RuvA subunits (via domain III) on 2 adjacent RuvB subunits; this complex drives branch migration. In the full resolvosome a probable DNA-RuvA(4)-RuvB(12)-RuvC(2) complex forms which resolves the HJ.</text>
</comment>
<comment type="subcellular location">
    <subcellularLocation>
        <location evidence="1">Cytoplasm</location>
    </subcellularLocation>
</comment>
<comment type="domain">
    <text evidence="1">Has three domains with a flexible linker between the domains II and III and assumes an 'L' shape. Domain III is highly mobile and contacts RuvB.</text>
</comment>
<comment type="similarity">
    <text evidence="1">Belongs to the RuvA family.</text>
</comment>
<gene>
    <name evidence="1" type="primary">ruvA</name>
    <name type="ordered locus">all0375</name>
</gene>
<protein>
    <recommendedName>
        <fullName evidence="1">Holliday junction branch migration complex subunit RuvA</fullName>
    </recommendedName>
</protein>
<name>RUVA_NOSS1</name>
<keyword id="KW-0963">Cytoplasm</keyword>
<keyword id="KW-0227">DNA damage</keyword>
<keyword id="KW-0233">DNA recombination</keyword>
<keyword id="KW-0234">DNA repair</keyword>
<keyword id="KW-0238">DNA-binding</keyword>
<keyword id="KW-1185">Reference proteome</keyword>
<dbReference type="EMBL" id="BA000019">
    <property type="protein sequence ID" value="BAB72333.1"/>
    <property type="molecule type" value="Genomic_DNA"/>
</dbReference>
<dbReference type="PIR" id="AF1853">
    <property type="entry name" value="AF1853"/>
</dbReference>
<dbReference type="RefSeq" id="WP_010994551.1">
    <property type="nucleotide sequence ID" value="NZ_RSCN01000017.1"/>
</dbReference>
<dbReference type="SMR" id="Q8YZT2"/>
<dbReference type="STRING" id="103690.gene:10492383"/>
<dbReference type="KEGG" id="ana:all0375"/>
<dbReference type="eggNOG" id="COG0632">
    <property type="taxonomic scope" value="Bacteria"/>
</dbReference>
<dbReference type="OrthoDB" id="5293449at2"/>
<dbReference type="Proteomes" id="UP000002483">
    <property type="component" value="Chromosome"/>
</dbReference>
<dbReference type="GO" id="GO:0005737">
    <property type="term" value="C:cytoplasm"/>
    <property type="evidence" value="ECO:0007669"/>
    <property type="project" value="UniProtKB-SubCell"/>
</dbReference>
<dbReference type="GO" id="GO:0009379">
    <property type="term" value="C:Holliday junction helicase complex"/>
    <property type="evidence" value="ECO:0007669"/>
    <property type="project" value="InterPro"/>
</dbReference>
<dbReference type="GO" id="GO:0048476">
    <property type="term" value="C:Holliday junction resolvase complex"/>
    <property type="evidence" value="ECO:0007669"/>
    <property type="project" value="UniProtKB-UniRule"/>
</dbReference>
<dbReference type="GO" id="GO:0005524">
    <property type="term" value="F:ATP binding"/>
    <property type="evidence" value="ECO:0007669"/>
    <property type="project" value="InterPro"/>
</dbReference>
<dbReference type="GO" id="GO:0000400">
    <property type="term" value="F:four-way junction DNA binding"/>
    <property type="evidence" value="ECO:0007669"/>
    <property type="project" value="UniProtKB-UniRule"/>
</dbReference>
<dbReference type="GO" id="GO:0009378">
    <property type="term" value="F:four-way junction helicase activity"/>
    <property type="evidence" value="ECO:0007669"/>
    <property type="project" value="InterPro"/>
</dbReference>
<dbReference type="GO" id="GO:0006310">
    <property type="term" value="P:DNA recombination"/>
    <property type="evidence" value="ECO:0007669"/>
    <property type="project" value="UniProtKB-UniRule"/>
</dbReference>
<dbReference type="GO" id="GO:0006281">
    <property type="term" value="P:DNA repair"/>
    <property type="evidence" value="ECO:0007669"/>
    <property type="project" value="UniProtKB-UniRule"/>
</dbReference>
<dbReference type="CDD" id="cd14332">
    <property type="entry name" value="UBA_RuvA_C"/>
    <property type="match status" value="1"/>
</dbReference>
<dbReference type="Gene3D" id="1.10.150.20">
    <property type="entry name" value="5' to 3' exonuclease, C-terminal subdomain"/>
    <property type="match status" value="1"/>
</dbReference>
<dbReference type="Gene3D" id="2.40.50.140">
    <property type="entry name" value="Nucleic acid-binding proteins"/>
    <property type="match status" value="1"/>
</dbReference>
<dbReference type="HAMAP" id="MF_00031">
    <property type="entry name" value="DNA_HJ_migration_RuvA"/>
    <property type="match status" value="1"/>
</dbReference>
<dbReference type="InterPro" id="IPR013849">
    <property type="entry name" value="DNA_helicase_Holl-junc_RuvA_I"/>
</dbReference>
<dbReference type="InterPro" id="IPR012340">
    <property type="entry name" value="NA-bd_OB-fold"/>
</dbReference>
<dbReference type="InterPro" id="IPR000085">
    <property type="entry name" value="RuvA"/>
</dbReference>
<dbReference type="InterPro" id="IPR010994">
    <property type="entry name" value="RuvA_2-like"/>
</dbReference>
<dbReference type="InterPro" id="IPR011114">
    <property type="entry name" value="RuvA_C"/>
</dbReference>
<dbReference type="InterPro" id="IPR036267">
    <property type="entry name" value="RuvA_C_sf"/>
</dbReference>
<dbReference type="NCBIfam" id="TIGR00084">
    <property type="entry name" value="ruvA"/>
    <property type="match status" value="1"/>
</dbReference>
<dbReference type="Pfam" id="PF14520">
    <property type="entry name" value="HHH_5"/>
    <property type="match status" value="1"/>
</dbReference>
<dbReference type="Pfam" id="PF07499">
    <property type="entry name" value="RuvA_C"/>
    <property type="match status" value="1"/>
</dbReference>
<dbReference type="Pfam" id="PF01330">
    <property type="entry name" value="RuvA_N"/>
    <property type="match status" value="1"/>
</dbReference>
<dbReference type="SUPFAM" id="SSF46929">
    <property type="entry name" value="DNA helicase RuvA subunit, C-terminal domain"/>
    <property type="match status" value="1"/>
</dbReference>
<dbReference type="SUPFAM" id="SSF50249">
    <property type="entry name" value="Nucleic acid-binding proteins"/>
    <property type="match status" value="1"/>
</dbReference>
<dbReference type="SUPFAM" id="SSF47781">
    <property type="entry name" value="RuvA domain 2-like"/>
    <property type="match status" value="1"/>
</dbReference>
<organism>
    <name type="scientific">Nostoc sp. (strain PCC 7120 / SAG 25.82 / UTEX 2576)</name>
    <dbReference type="NCBI Taxonomy" id="103690"/>
    <lineage>
        <taxon>Bacteria</taxon>
        <taxon>Bacillati</taxon>
        <taxon>Cyanobacteriota</taxon>
        <taxon>Cyanophyceae</taxon>
        <taxon>Nostocales</taxon>
        <taxon>Nostocaceae</taxon>
        <taxon>Nostoc</taxon>
    </lineage>
</organism>
<proteinExistence type="inferred from homology"/>
<feature type="chain" id="PRO_0000094598" description="Holliday junction branch migration complex subunit RuvA">
    <location>
        <begin position="1"/>
        <end position="213"/>
    </location>
</feature>
<feature type="region of interest" description="Domain I" evidence="1">
    <location>
        <begin position="1"/>
        <end position="69"/>
    </location>
</feature>
<feature type="region of interest" description="Domain II" evidence="1">
    <location>
        <begin position="70"/>
        <end position="148"/>
    </location>
</feature>
<feature type="region of interest" description="Flexible linker" evidence="1">
    <location>
        <begin position="149"/>
        <end position="158"/>
    </location>
</feature>
<feature type="region of interest" description="Domain III" evidence="1">
    <location>
        <begin position="158"/>
        <end position="213"/>
    </location>
</feature>
<reference key="1">
    <citation type="journal article" date="2001" name="DNA Res.">
        <title>Complete genomic sequence of the filamentous nitrogen-fixing cyanobacterium Anabaena sp. strain PCC 7120.</title>
        <authorList>
            <person name="Kaneko T."/>
            <person name="Nakamura Y."/>
            <person name="Wolk C.P."/>
            <person name="Kuritz T."/>
            <person name="Sasamoto S."/>
            <person name="Watanabe A."/>
            <person name="Iriguchi M."/>
            <person name="Ishikawa A."/>
            <person name="Kawashima K."/>
            <person name="Kimura T."/>
            <person name="Kishida Y."/>
            <person name="Kohara M."/>
            <person name="Matsumoto M."/>
            <person name="Matsuno A."/>
            <person name="Muraki A."/>
            <person name="Nakazaki N."/>
            <person name="Shimpo S."/>
            <person name="Sugimoto M."/>
            <person name="Takazawa M."/>
            <person name="Yamada M."/>
            <person name="Yasuda M."/>
            <person name="Tabata S."/>
        </authorList>
    </citation>
    <scope>NUCLEOTIDE SEQUENCE [LARGE SCALE GENOMIC DNA]</scope>
    <source>
        <strain>PCC 7120 / SAG 25.82 / UTEX 2576</strain>
    </source>
</reference>
<sequence length="213" mass="23162">MISYLKGIVAGIQNVGSNRVILTLEVNGMGYDLQIPQRLAKQLPTTGDLVQIFTHYQVREEIPLLYGFSSPAERDLFRHLLSVSGVGAASAIALLDTLELPDLVQAIIAANVQILIQAPGVGKKIAERVCLELKAKLIEWRKSAGFFVATEGPAPGILEEVQMTLFALGYTAHEVSHALHVVSEDIGLPKDAYVEDWIKQAIAHLSSSEQVSH</sequence>
<accession>Q8YZT2</accession>